<sequence>MTRSIWKGPFVDTCLFKQKKIRWRIWSRRSCILPQFVGCYAQIYNGKGFVGLKITEEMVGHKFGEFASTRKTSSLGKRALPSKTKIKPIKKVR</sequence>
<keyword id="KW-0496">Mitochondrion</keyword>
<keyword id="KW-0687">Ribonucleoprotein</keyword>
<keyword id="KW-0689">Ribosomal protein</keyword>
<feature type="chain" id="PRO_0000130019" description="Small ribosomal subunit protein uS19m">
    <location>
        <begin position="1"/>
        <end position="93"/>
    </location>
</feature>
<comment type="subcellular location">
    <subcellularLocation>
        <location>Mitochondrion</location>
    </subcellularLocation>
</comment>
<comment type="similarity">
    <text evidence="1">Belongs to the universal ribosomal protein uS19 family.</text>
</comment>
<accession>P26874</accession>
<organism>
    <name type="scientific">Marchantia polymorpha</name>
    <name type="common">Common liverwort</name>
    <name type="synonym">Marchantia aquatica</name>
    <dbReference type="NCBI Taxonomy" id="3197"/>
    <lineage>
        <taxon>Eukaryota</taxon>
        <taxon>Viridiplantae</taxon>
        <taxon>Streptophyta</taxon>
        <taxon>Embryophyta</taxon>
        <taxon>Marchantiophyta</taxon>
        <taxon>Marchantiopsida</taxon>
        <taxon>Marchantiidae</taxon>
        <taxon>Marchantiales</taxon>
        <taxon>Marchantiaceae</taxon>
        <taxon>Marchantia</taxon>
    </lineage>
</organism>
<protein>
    <recommendedName>
        <fullName evidence="1">Small ribosomal subunit protein uS19m</fullName>
    </recommendedName>
    <alternativeName>
        <fullName>Ribosomal protein S19, mitochondrial</fullName>
    </alternativeName>
</protein>
<dbReference type="EMBL" id="M68929">
    <property type="protein sequence ID" value="AAC09416.1"/>
    <property type="molecule type" value="Genomic_DNA"/>
</dbReference>
<dbReference type="PIR" id="S25976">
    <property type="entry name" value="S25976"/>
</dbReference>
<dbReference type="RefSeq" id="NP_054419.1">
    <property type="nucleotide sequence ID" value="NC_001660.1"/>
</dbReference>
<dbReference type="SMR" id="P26874"/>
<dbReference type="GeneID" id="2702468"/>
<dbReference type="GO" id="GO:0005739">
    <property type="term" value="C:mitochondrion"/>
    <property type="evidence" value="ECO:0007669"/>
    <property type="project" value="UniProtKB-SubCell"/>
</dbReference>
<dbReference type="GO" id="GO:0015935">
    <property type="term" value="C:small ribosomal subunit"/>
    <property type="evidence" value="ECO:0007669"/>
    <property type="project" value="InterPro"/>
</dbReference>
<dbReference type="GO" id="GO:0003723">
    <property type="term" value="F:RNA binding"/>
    <property type="evidence" value="ECO:0007669"/>
    <property type="project" value="InterPro"/>
</dbReference>
<dbReference type="GO" id="GO:0003735">
    <property type="term" value="F:structural constituent of ribosome"/>
    <property type="evidence" value="ECO:0007669"/>
    <property type="project" value="InterPro"/>
</dbReference>
<dbReference type="GO" id="GO:0006412">
    <property type="term" value="P:translation"/>
    <property type="evidence" value="ECO:0007669"/>
    <property type="project" value="InterPro"/>
</dbReference>
<dbReference type="Gene3D" id="3.30.860.10">
    <property type="entry name" value="30s Ribosomal Protein S19, Chain A"/>
    <property type="match status" value="1"/>
</dbReference>
<dbReference type="HAMAP" id="MF_00531">
    <property type="entry name" value="Ribosomal_uS19"/>
    <property type="match status" value="1"/>
</dbReference>
<dbReference type="InterPro" id="IPR002222">
    <property type="entry name" value="Ribosomal_uS19"/>
</dbReference>
<dbReference type="InterPro" id="IPR005732">
    <property type="entry name" value="Ribosomal_uS19_bac-type"/>
</dbReference>
<dbReference type="InterPro" id="IPR020934">
    <property type="entry name" value="Ribosomal_uS19_CS"/>
</dbReference>
<dbReference type="InterPro" id="IPR023575">
    <property type="entry name" value="Ribosomal_uS19_SF"/>
</dbReference>
<dbReference type="NCBIfam" id="TIGR01050">
    <property type="entry name" value="rpsS_bact"/>
    <property type="match status" value="1"/>
</dbReference>
<dbReference type="PANTHER" id="PTHR11880">
    <property type="entry name" value="RIBOSOMAL PROTEIN S19P FAMILY MEMBER"/>
    <property type="match status" value="1"/>
</dbReference>
<dbReference type="PANTHER" id="PTHR11880:SF67">
    <property type="entry name" value="SMALL RIBOSOMAL SUBUNIT PROTEIN US19M"/>
    <property type="match status" value="1"/>
</dbReference>
<dbReference type="Pfam" id="PF00203">
    <property type="entry name" value="Ribosomal_S19"/>
    <property type="match status" value="1"/>
</dbReference>
<dbReference type="PIRSF" id="PIRSF002144">
    <property type="entry name" value="Ribosomal_S19"/>
    <property type="match status" value="1"/>
</dbReference>
<dbReference type="PRINTS" id="PR00975">
    <property type="entry name" value="RIBOSOMALS19"/>
</dbReference>
<dbReference type="SUPFAM" id="SSF54570">
    <property type="entry name" value="Ribosomal protein S19"/>
    <property type="match status" value="1"/>
</dbReference>
<dbReference type="PROSITE" id="PS00323">
    <property type="entry name" value="RIBOSOMAL_S19"/>
    <property type="match status" value="1"/>
</dbReference>
<geneLocation type="mitochondrion"/>
<evidence type="ECO:0000305" key="1"/>
<gene>
    <name type="primary">RPS19</name>
</gene>
<proteinExistence type="inferred from homology"/>
<name>RT19_MARPO</name>
<reference key="1">
    <citation type="journal article" date="1992" name="J. Mol. Biol.">
        <title>Gene organization deduced from the complete sequence of liverwort Marchantia polymorpha mitochondrial DNA. A primitive form of plant mitochondrial genome.</title>
        <authorList>
            <person name="Oda K."/>
            <person name="Yamato K."/>
            <person name="Ohta E."/>
            <person name="Nakamura Y."/>
            <person name="Takemura M."/>
            <person name="Nozato N."/>
            <person name="Akashi K."/>
            <person name="Kanegae T."/>
            <person name="Ogura Y."/>
            <person name="Kohchi T."/>
            <person name="Ohyama K."/>
        </authorList>
    </citation>
    <scope>NUCLEOTIDE SEQUENCE [GENOMIC DNA]</scope>
</reference>
<reference key="2">
    <citation type="journal article" date="1992" name="Nucleic Acids Res.">
        <title>Gene clusters for ribosomal proteins in the mitochondrial genome of a liverwort, Marchantia polymorpha.</title>
        <authorList>
            <person name="Takemura M."/>
            <person name="Oda K."/>
            <person name="Yamato K."/>
            <person name="Ohta E."/>
            <person name="Nakamura Y."/>
            <person name="Nozato N."/>
            <person name="Akashi K."/>
            <person name="Ohyama K."/>
        </authorList>
    </citation>
    <scope>NUCLEOTIDE SEQUENCE [GENOMIC DNA]</scope>
</reference>